<evidence type="ECO:0000255" key="1"/>
<evidence type="ECO:0000305" key="2"/>
<gene>
    <name type="primary">LINC00052</name>
    <name type="synonym">NCRNA00052</name>
    <name type="synonym">TMEM83</name>
</gene>
<dbReference type="EMBL" id="AK056023">
    <property type="protein sequence ID" value="BAB71075.1"/>
    <property type="molecule type" value="mRNA"/>
</dbReference>
<dbReference type="BioMuta" id="HGNC:26455"/>
<dbReference type="AGR" id="HGNC:26455"/>
<dbReference type="GeneCards" id="LINC00052"/>
<dbReference type="HGNC" id="HGNC:26455">
    <property type="gene designation" value="LINC00052"/>
</dbReference>
<dbReference type="neXtProt" id="NX_Q96N35"/>
<dbReference type="InParanoid" id="Q96N35"/>
<dbReference type="PAN-GO" id="Q96N35">
    <property type="GO annotations" value="0 GO annotations based on evolutionary models"/>
</dbReference>
<dbReference type="PathwayCommons" id="Q96N35"/>
<dbReference type="Pharos" id="Q96N35">
    <property type="development level" value="Tdark"/>
</dbReference>
<dbReference type="Proteomes" id="UP000005640">
    <property type="component" value="Unplaced"/>
</dbReference>
<dbReference type="RNAct" id="Q96N35">
    <property type="molecule type" value="protein"/>
</dbReference>
<dbReference type="GO" id="GO:0016020">
    <property type="term" value="C:membrane"/>
    <property type="evidence" value="ECO:0007669"/>
    <property type="project" value="UniProtKB-SubCell"/>
</dbReference>
<reference key="1">
    <citation type="journal article" date="2004" name="Nat. Genet.">
        <title>Complete sequencing and characterization of 21,243 full-length human cDNAs.</title>
        <authorList>
            <person name="Ota T."/>
            <person name="Suzuki Y."/>
            <person name="Nishikawa T."/>
            <person name="Otsuki T."/>
            <person name="Sugiyama T."/>
            <person name="Irie R."/>
            <person name="Wakamatsu A."/>
            <person name="Hayashi K."/>
            <person name="Sato H."/>
            <person name="Nagai K."/>
            <person name="Kimura K."/>
            <person name="Makita H."/>
            <person name="Sekine M."/>
            <person name="Obayashi M."/>
            <person name="Nishi T."/>
            <person name="Shibahara T."/>
            <person name="Tanaka T."/>
            <person name="Ishii S."/>
            <person name="Yamamoto J."/>
            <person name="Saito K."/>
            <person name="Kawai Y."/>
            <person name="Isono Y."/>
            <person name="Nakamura Y."/>
            <person name="Nagahari K."/>
            <person name="Murakami K."/>
            <person name="Yasuda T."/>
            <person name="Iwayanagi T."/>
            <person name="Wagatsuma M."/>
            <person name="Shiratori A."/>
            <person name="Sudo H."/>
            <person name="Hosoiri T."/>
            <person name="Kaku Y."/>
            <person name="Kodaira H."/>
            <person name="Kondo H."/>
            <person name="Sugawara M."/>
            <person name="Takahashi M."/>
            <person name="Kanda K."/>
            <person name="Yokoi T."/>
            <person name="Furuya T."/>
            <person name="Kikkawa E."/>
            <person name="Omura Y."/>
            <person name="Abe K."/>
            <person name="Kamihara K."/>
            <person name="Katsuta N."/>
            <person name="Sato K."/>
            <person name="Tanikawa M."/>
            <person name="Yamazaki M."/>
            <person name="Ninomiya K."/>
            <person name="Ishibashi T."/>
            <person name="Yamashita H."/>
            <person name="Murakawa K."/>
            <person name="Fujimori K."/>
            <person name="Tanai H."/>
            <person name="Kimata M."/>
            <person name="Watanabe M."/>
            <person name="Hiraoka S."/>
            <person name="Chiba Y."/>
            <person name="Ishida S."/>
            <person name="Ono Y."/>
            <person name="Takiguchi S."/>
            <person name="Watanabe S."/>
            <person name="Yosida M."/>
            <person name="Hotuta T."/>
            <person name="Kusano J."/>
            <person name="Kanehori K."/>
            <person name="Takahashi-Fujii A."/>
            <person name="Hara H."/>
            <person name="Tanase T.-O."/>
            <person name="Nomura Y."/>
            <person name="Togiya S."/>
            <person name="Komai F."/>
            <person name="Hara R."/>
            <person name="Takeuchi K."/>
            <person name="Arita M."/>
            <person name="Imose N."/>
            <person name="Musashino K."/>
            <person name="Yuuki H."/>
            <person name="Oshima A."/>
            <person name="Sasaki N."/>
            <person name="Aotsuka S."/>
            <person name="Yoshikawa Y."/>
            <person name="Matsunawa H."/>
            <person name="Ichihara T."/>
            <person name="Shiohata N."/>
            <person name="Sano S."/>
            <person name="Moriya S."/>
            <person name="Momiyama H."/>
            <person name="Satoh N."/>
            <person name="Takami S."/>
            <person name="Terashima Y."/>
            <person name="Suzuki O."/>
            <person name="Nakagawa S."/>
            <person name="Senoh A."/>
            <person name="Mizoguchi H."/>
            <person name="Goto Y."/>
            <person name="Shimizu F."/>
            <person name="Wakebe H."/>
            <person name="Hishigaki H."/>
            <person name="Watanabe T."/>
            <person name="Sugiyama A."/>
            <person name="Takemoto M."/>
            <person name="Kawakami B."/>
            <person name="Yamazaki M."/>
            <person name="Watanabe K."/>
            <person name="Kumagai A."/>
            <person name="Itakura S."/>
            <person name="Fukuzumi Y."/>
            <person name="Fujimori Y."/>
            <person name="Komiyama M."/>
            <person name="Tashiro H."/>
            <person name="Tanigami A."/>
            <person name="Fujiwara T."/>
            <person name="Ono T."/>
            <person name="Yamada K."/>
            <person name="Fujii Y."/>
            <person name="Ozaki K."/>
            <person name="Hirao M."/>
            <person name="Ohmori Y."/>
            <person name="Kawabata A."/>
            <person name="Hikiji T."/>
            <person name="Kobatake N."/>
            <person name="Inagaki H."/>
            <person name="Ikema Y."/>
            <person name="Okamoto S."/>
            <person name="Okitani R."/>
            <person name="Kawakami T."/>
            <person name="Noguchi S."/>
            <person name="Itoh T."/>
            <person name="Shigeta K."/>
            <person name="Senba T."/>
            <person name="Matsumura K."/>
            <person name="Nakajima Y."/>
            <person name="Mizuno T."/>
            <person name="Morinaga M."/>
            <person name="Sasaki M."/>
            <person name="Togashi T."/>
            <person name="Oyama M."/>
            <person name="Hata H."/>
            <person name="Watanabe M."/>
            <person name="Komatsu T."/>
            <person name="Mizushima-Sugano J."/>
            <person name="Satoh T."/>
            <person name="Shirai Y."/>
            <person name="Takahashi Y."/>
            <person name="Nakagawa K."/>
            <person name="Okumura K."/>
            <person name="Nagase T."/>
            <person name="Nomura N."/>
            <person name="Kikuchi H."/>
            <person name="Masuho Y."/>
            <person name="Yamashita R."/>
            <person name="Nakai K."/>
            <person name="Yada T."/>
            <person name="Nakamura Y."/>
            <person name="Ohara O."/>
            <person name="Isogai T."/>
            <person name="Sugano S."/>
        </authorList>
    </citation>
    <scope>NUCLEOTIDE SEQUENCE [LARGE SCALE MRNA]</scope>
</reference>
<comment type="subcellular location">
    <subcellularLocation>
        <location evidence="2">Membrane</location>
        <topology evidence="2">Single-pass membrane protein</topology>
    </subcellularLocation>
</comment>
<comment type="caution">
    <text evidence="2">Product of a dubious CDS prediction. Probable non-coding RNA.</text>
</comment>
<proteinExistence type="uncertain"/>
<name>TMM83_HUMAN</name>
<sequence length="136" mass="15076">MNCDALLHHSAIPEDFLHIFLLLQKISVSLPLSLSQSVCLFYSISLCVSLLLHISLCVSVYVSLSLSSFPCFSLTHTHTHSQLSKDTSVLTFTFCFKQHTHFTLNYTSHAHELSAPSVHPTCVFTFKAAPSPRPAT</sequence>
<accession>Q96N35</accession>
<keyword id="KW-0472">Membrane</keyword>
<keyword id="KW-1185">Reference proteome</keyword>
<keyword id="KW-0812">Transmembrane</keyword>
<keyword id="KW-1133">Transmembrane helix</keyword>
<organism>
    <name type="scientific">Homo sapiens</name>
    <name type="common">Human</name>
    <dbReference type="NCBI Taxonomy" id="9606"/>
    <lineage>
        <taxon>Eukaryota</taxon>
        <taxon>Metazoa</taxon>
        <taxon>Chordata</taxon>
        <taxon>Craniata</taxon>
        <taxon>Vertebrata</taxon>
        <taxon>Euteleostomi</taxon>
        <taxon>Mammalia</taxon>
        <taxon>Eutheria</taxon>
        <taxon>Euarchontoglires</taxon>
        <taxon>Primates</taxon>
        <taxon>Haplorrhini</taxon>
        <taxon>Catarrhini</taxon>
        <taxon>Hominidae</taxon>
        <taxon>Homo</taxon>
    </lineage>
</organism>
<feature type="chain" id="PRO_0000232911" description="Putative uncharacterized protein encoded by LINC00052">
    <location>
        <begin position="1"/>
        <end position="136"/>
    </location>
</feature>
<feature type="transmembrane region" description="Helical" evidence="1">
    <location>
        <begin position="40"/>
        <end position="62"/>
    </location>
</feature>
<protein>
    <recommendedName>
        <fullName>Putative uncharacterized protein encoded by LINC00052</fullName>
    </recommendedName>
    <alternativeName>
        <fullName>Putative transmembrane protein 83</fullName>
    </alternativeName>
</protein>